<sequence length="88" mass="10223">MQGKCWFLENKALKPFVCFYGGDQFLYIGDRIVSYFSTNDLYVALRGRIDKDLSLSRKVELYNGECVYLFCEHPAVGIVNTDFKLEIH</sequence>
<protein>
    <recommendedName>
        <fullName>Non-structural protein 4b</fullName>
        <shortName>ns4b</shortName>
    </recommendedName>
    <alternativeName>
        <fullName>Accessory protein 4b</fullName>
    </alternativeName>
</protein>
<comment type="similarity">
    <text evidence="2">Belongs to the coronaviruses NS4b protein family.</text>
</comment>
<keyword id="KW-1185">Reference proteome</keyword>
<dbReference type="EMBL" id="X15654">
    <property type="protein sequence ID" value="CAA33683.1"/>
    <property type="molecule type" value="Genomic_RNA"/>
</dbReference>
<dbReference type="EMBL" id="X64942">
    <property type="protein sequence ID" value="CAA46115.1"/>
    <property type="molecule type" value="Genomic_RNA"/>
</dbReference>
<dbReference type="EMBL" id="AF304460">
    <property type="protein sequence ID" value="AAG48594.1"/>
    <property type="molecule type" value="Genomic_RNA"/>
</dbReference>
<dbReference type="PIR" id="B34038">
    <property type="entry name" value="MNIHH2"/>
</dbReference>
<dbReference type="PIR" id="S25710">
    <property type="entry name" value="S25710"/>
</dbReference>
<dbReference type="RefSeq" id="NP_073553.1">
    <property type="nucleotide sequence ID" value="NC_002645.1"/>
</dbReference>
<dbReference type="DNASU" id="918760"/>
<dbReference type="GeneID" id="918760"/>
<dbReference type="KEGG" id="vg:918760"/>
<dbReference type="OrthoDB" id="19204at10239"/>
<dbReference type="Proteomes" id="UP000006716">
    <property type="component" value="Genome"/>
</dbReference>
<dbReference type="InterPro" id="IPR046446">
    <property type="entry name" value="a/bCoV_VIROPORIN_3A-like_CD"/>
</dbReference>
<dbReference type="InterPro" id="IPR004293">
    <property type="entry name" value="Coronavirus_Orf3a/b"/>
</dbReference>
<dbReference type="Pfam" id="PF03053">
    <property type="entry name" value="Corona_NS3b"/>
    <property type="match status" value="1"/>
</dbReference>
<dbReference type="PROSITE" id="PS51967">
    <property type="entry name" value="COV_VIROPORIN_3A_CD"/>
    <property type="match status" value="1"/>
</dbReference>
<reference key="1">
    <citation type="journal article" date="1989" name="Nucleic Acids Res.">
        <title>Nucleotide sequence of the human coronavirus HCV 229E mRNA 4 and mRNA 5 unique regions.</title>
        <authorList>
            <person name="Raabe T."/>
            <person name="Siddell S.G."/>
        </authorList>
    </citation>
    <scope>NUCLEOTIDE SEQUENCE [GENOMIC RNA]</scope>
</reference>
<reference key="2">
    <citation type="journal article" date="1992" name="Virus Res.">
        <title>Sequence analysis of human coronavirus 229E mRNAs 4 and 5: evidence for polymorphism and homology with myelin basic protein.</title>
        <authorList>
            <person name="Jouvenne P."/>
            <person name="Mounir S."/>
            <person name="Stewart J.N."/>
            <person name="Richardson C.D."/>
            <person name="Talbot P.J."/>
        </authorList>
    </citation>
    <scope>NUCLEOTIDE SEQUENCE [GENOMIC RNA]</scope>
    <source>
        <strain>Isolate J22</strain>
    </source>
</reference>
<reference key="3">
    <citation type="journal article" date="2001" name="J. Gen. Virol.">
        <title>Infectious RNA transcribed in vitro from a cDNA copy of the human coronavirus genome cloned in vaccinia virus.</title>
        <authorList>
            <person name="Thiel V."/>
            <person name="Herold J."/>
            <person name="Schelle B."/>
            <person name="Siddell S.G."/>
        </authorList>
    </citation>
    <scope>NUCLEOTIDE SEQUENCE [GENOMIC RNA]</scope>
</reference>
<reference key="4">
    <citation type="journal article" date="1998" name="Can. J. Microbiol.">
        <title>Characterization of the expression and immunogenicity of the ns4b protein of human coronavirus 229E.</title>
        <authorList>
            <person name="Chagnon F."/>
            <person name="Lamarre A."/>
            <person name="Lachance C."/>
            <person name="Krakowski M."/>
            <person name="Owens T."/>
            <person name="Laliberte J.F."/>
            <person name="Talbot P.J."/>
        </authorList>
    </citation>
    <scope>CHARACTERIZATION</scope>
</reference>
<gene>
    <name type="ORF">4b</name>
</gene>
<proteinExistence type="evidence at protein level"/>
<accession>P19740</accession>
<accession>Q01161</accession>
<name>NS4B_CVH22</name>
<organism>
    <name type="scientific">Human coronavirus 229E</name>
    <name type="common">HCoV-229E</name>
    <dbReference type="NCBI Taxonomy" id="11137"/>
    <lineage>
        <taxon>Viruses</taxon>
        <taxon>Riboviria</taxon>
        <taxon>Orthornavirae</taxon>
        <taxon>Pisuviricota</taxon>
        <taxon>Pisoniviricetes</taxon>
        <taxon>Nidovirales</taxon>
        <taxon>Cornidovirineae</taxon>
        <taxon>Coronaviridae</taxon>
        <taxon>Orthocoronavirinae</taxon>
        <taxon>Alphacoronavirus</taxon>
        <taxon>Duvinacovirus</taxon>
    </lineage>
</organism>
<evidence type="ECO:0000255" key="1">
    <source>
        <dbReference type="PROSITE-ProRule" id="PRU01312"/>
    </source>
</evidence>
<evidence type="ECO:0000305" key="2"/>
<feature type="chain" id="PRO_0000106071" description="Non-structural protein 4b">
    <location>
        <begin position="1"/>
        <end position="88"/>
    </location>
</feature>
<feature type="domain" description="CoV 3a-like viroporin CD" evidence="1">
    <location>
        <begin position="1"/>
        <end position="75"/>
    </location>
</feature>
<feature type="sequence variant" description="In strain: Isolate J22.">
    <original>MQGKCWFLENKALKPFVCFYGGDQFLYIGDRIVSYF</original>
    <variation>MSLFVVYFALFKARSHRGRAALIVFKILSYL</variation>
    <location>
        <begin position="1"/>
        <end position="36"/>
    </location>
</feature>
<organismHost>
    <name type="scientific">Homo sapiens</name>
    <name type="common">Human</name>
    <dbReference type="NCBI Taxonomy" id="9606"/>
</organismHost>